<gene>
    <name evidence="1" type="primary">fabZ</name>
    <name type="ordered locus">Gura_3234</name>
</gene>
<reference key="1">
    <citation type="submission" date="2007-05" db="EMBL/GenBank/DDBJ databases">
        <title>Complete sequence of Geobacter uraniireducens Rf4.</title>
        <authorList>
            <consortium name="US DOE Joint Genome Institute"/>
            <person name="Copeland A."/>
            <person name="Lucas S."/>
            <person name="Lapidus A."/>
            <person name="Barry K."/>
            <person name="Detter J.C."/>
            <person name="Glavina del Rio T."/>
            <person name="Hammon N."/>
            <person name="Israni S."/>
            <person name="Dalin E."/>
            <person name="Tice H."/>
            <person name="Pitluck S."/>
            <person name="Chertkov O."/>
            <person name="Brettin T."/>
            <person name="Bruce D."/>
            <person name="Han C."/>
            <person name="Schmutz J."/>
            <person name="Larimer F."/>
            <person name="Land M."/>
            <person name="Hauser L."/>
            <person name="Kyrpides N."/>
            <person name="Mikhailova N."/>
            <person name="Shelobolina E."/>
            <person name="Aklujkar M."/>
            <person name="Lovley D."/>
            <person name="Richardson P."/>
        </authorList>
    </citation>
    <scope>NUCLEOTIDE SEQUENCE [LARGE SCALE GENOMIC DNA]</scope>
    <source>
        <strain>ATCC BAA-1134 / JCM 13001 / Rf4</strain>
    </source>
</reference>
<comment type="function">
    <text evidence="1">Involved in unsaturated fatty acids biosynthesis. Catalyzes the dehydration of short chain beta-hydroxyacyl-ACPs and long chain saturated and unsaturated beta-hydroxyacyl-ACPs.</text>
</comment>
<comment type="catalytic activity">
    <reaction evidence="1">
        <text>a (3R)-hydroxyacyl-[ACP] = a (2E)-enoyl-[ACP] + H2O</text>
        <dbReference type="Rhea" id="RHEA:13097"/>
        <dbReference type="Rhea" id="RHEA-COMP:9925"/>
        <dbReference type="Rhea" id="RHEA-COMP:9945"/>
        <dbReference type="ChEBI" id="CHEBI:15377"/>
        <dbReference type="ChEBI" id="CHEBI:78784"/>
        <dbReference type="ChEBI" id="CHEBI:78827"/>
        <dbReference type="EC" id="4.2.1.59"/>
    </reaction>
</comment>
<comment type="subcellular location">
    <subcellularLocation>
        <location evidence="1">Cytoplasm</location>
    </subcellularLocation>
</comment>
<comment type="similarity">
    <text evidence="1">Belongs to the thioester dehydratase family. FabZ subfamily.</text>
</comment>
<comment type="sequence caution" evidence="2">
    <conflict type="erroneous initiation">
        <sequence resource="EMBL-CDS" id="ABQ27395"/>
    </conflict>
</comment>
<accession>A5G6H7</accession>
<evidence type="ECO:0000255" key="1">
    <source>
        <dbReference type="HAMAP-Rule" id="MF_00406"/>
    </source>
</evidence>
<evidence type="ECO:0000305" key="2"/>
<proteinExistence type="inferred from homology"/>
<sequence length="145" mass="16287">MDINEIMKILPHRFPFLMVDRIVEMEPGKRCVGLKNVTINEPFFQGHFPGHPVMPGVLIVEAMAQVAGIMAYLASDDETRKKVSYFMAIDNAKFRKPVFPGDQLRIEVETIFSRRGIWSVAGKAYVDGVLATEAELKATFAEKAK</sequence>
<name>FABZ_GEOUR</name>
<protein>
    <recommendedName>
        <fullName evidence="1">3-hydroxyacyl-[acyl-carrier-protein] dehydratase FabZ</fullName>
        <ecNumber evidence="1">4.2.1.59</ecNumber>
    </recommendedName>
    <alternativeName>
        <fullName evidence="1">(3R)-hydroxymyristoyl-[acyl-carrier-protein] dehydratase</fullName>
        <shortName evidence="1">(3R)-hydroxymyristoyl-ACP dehydrase</shortName>
    </alternativeName>
    <alternativeName>
        <fullName evidence="1">Beta-hydroxyacyl-ACP dehydratase</fullName>
    </alternativeName>
</protein>
<keyword id="KW-0963">Cytoplasm</keyword>
<keyword id="KW-0441">Lipid A biosynthesis</keyword>
<keyword id="KW-0444">Lipid biosynthesis</keyword>
<keyword id="KW-0443">Lipid metabolism</keyword>
<keyword id="KW-0456">Lyase</keyword>
<keyword id="KW-1185">Reference proteome</keyword>
<dbReference type="EC" id="4.2.1.59" evidence="1"/>
<dbReference type="EMBL" id="CP000698">
    <property type="protein sequence ID" value="ABQ27395.1"/>
    <property type="status" value="ALT_INIT"/>
    <property type="molecule type" value="Genomic_DNA"/>
</dbReference>
<dbReference type="RefSeq" id="WP_011940058.1">
    <property type="nucleotide sequence ID" value="NC_009483.1"/>
</dbReference>
<dbReference type="SMR" id="A5G6H7"/>
<dbReference type="STRING" id="351605.Gura_3234"/>
<dbReference type="KEGG" id="gur:Gura_3234"/>
<dbReference type="HOGENOM" id="CLU_078912_3_0_7"/>
<dbReference type="OrthoDB" id="9772788at2"/>
<dbReference type="Proteomes" id="UP000006695">
    <property type="component" value="Chromosome"/>
</dbReference>
<dbReference type="GO" id="GO:0005737">
    <property type="term" value="C:cytoplasm"/>
    <property type="evidence" value="ECO:0007669"/>
    <property type="project" value="UniProtKB-SubCell"/>
</dbReference>
<dbReference type="GO" id="GO:0016020">
    <property type="term" value="C:membrane"/>
    <property type="evidence" value="ECO:0007669"/>
    <property type="project" value="GOC"/>
</dbReference>
<dbReference type="GO" id="GO:0019171">
    <property type="term" value="F:(3R)-hydroxyacyl-[acyl-carrier-protein] dehydratase activity"/>
    <property type="evidence" value="ECO:0007669"/>
    <property type="project" value="UniProtKB-EC"/>
</dbReference>
<dbReference type="GO" id="GO:0006633">
    <property type="term" value="P:fatty acid biosynthetic process"/>
    <property type="evidence" value="ECO:0007669"/>
    <property type="project" value="UniProtKB-UniRule"/>
</dbReference>
<dbReference type="GO" id="GO:0009245">
    <property type="term" value="P:lipid A biosynthetic process"/>
    <property type="evidence" value="ECO:0007669"/>
    <property type="project" value="UniProtKB-UniRule"/>
</dbReference>
<dbReference type="CDD" id="cd01288">
    <property type="entry name" value="FabZ"/>
    <property type="match status" value="1"/>
</dbReference>
<dbReference type="FunFam" id="3.10.129.10:FF:000001">
    <property type="entry name" value="3-hydroxyacyl-[acyl-carrier-protein] dehydratase FabZ"/>
    <property type="match status" value="1"/>
</dbReference>
<dbReference type="Gene3D" id="3.10.129.10">
    <property type="entry name" value="Hotdog Thioesterase"/>
    <property type="match status" value="1"/>
</dbReference>
<dbReference type="HAMAP" id="MF_00406">
    <property type="entry name" value="FabZ"/>
    <property type="match status" value="1"/>
</dbReference>
<dbReference type="InterPro" id="IPR013114">
    <property type="entry name" value="FabA_FabZ"/>
</dbReference>
<dbReference type="InterPro" id="IPR010084">
    <property type="entry name" value="FabZ"/>
</dbReference>
<dbReference type="InterPro" id="IPR029069">
    <property type="entry name" value="HotDog_dom_sf"/>
</dbReference>
<dbReference type="NCBIfam" id="TIGR01750">
    <property type="entry name" value="fabZ"/>
    <property type="match status" value="1"/>
</dbReference>
<dbReference type="NCBIfam" id="NF000582">
    <property type="entry name" value="PRK00006.1"/>
    <property type="match status" value="1"/>
</dbReference>
<dbReference type="PANTHER" id="PTHR30272">
    <property type="entry name" value="3-HYDROXYACYL-[ACYL-CARRIER-PROTEIN] DEHYDRATASE"/>
    <property type="match status" value="1"/>
</dbReference>
<dbReference type="PANTHER" id="PTHR30272:SF1">
    <property type="entry name" value="3-HYDROXYACYL-[ACYL-CARRIER-PROTEIN] DEHYDRATASE"/>
    <property type="match status" value="1"/>
</dbReference>
<dbReference type="Pfam" id="PF07977">
    <property type="entry name" value="FabA"/>
    <property type="match status" value="1"/>
</dbReference>
<dbReference type="SUPFAM" id="SSF54637">
    <property type="entry name" value="Thioesterase/thiol ester dehydrase-isomerase"/>
    <property type="match status" value="1"/>
</dbReference>
<organism>
    <name type="scientific">Geotalea uraniireducens (strain Rf4)</name>
    <name type="common">Geobacter uraniireducens</name>
    <dbReference type="NCBI Taxonomy" id="351605"/>
    <lineage>
        <taxon>Bacteria</taxon>
        <taxon>Pseudomonadati</taxon>
        <taxon>Thermodesulfobacteriota</taxon>
        <taxon>Desulfuromonadia</taxon>
        <taxon>Geobacterales</taxon>
        <taxon>Geobacteraceae</taxon>
        <taxon>Geotalea</taxon>
    </lineage>
</organism>
<feature type="chain" id="PRO_0000340776" description="3-hydroxyacyl-[acyl-carrier-protein] dehydratase FabZ">
    <location>
        <begin position="1"/>
        <end position="145"/>
    </location>
</feature>
<feature type="active site" evidence="1">
    <location>
        <position position="47"/>
    </location>
</feature>